<accession>Q6AYD4</accession>
<keyword id="KW-0130">Cell adhesion</keyword>
<keyword id="KW-0965">Cell junction</keyword>
<keyword id="KW-1003">Cell membrane</keyword>
<keyword id="KW-1015">Disulfide bond</keyword>
<keyword id="KW-0325">Glycoprotein</keyword>
<keyword id="KW-0393">Immunoglobulin domain</keyword>
<keyword id="KW-0991">Intellectual disability</keyword>
<keyword id="KW-0472">Membrane</keyword>
<keyword id="KW-0597">Phosphoprotein</keyword>
<keyword id="KW-1185">Reference proteome</keyword>
<keyword id="KW-0677">Repeat</keyword>
<keyword id="KW-0732">Signal</keyword>
<keyword id="KW-0796">Tight junction</keyword>
<keyword id="KW-0812">Transmembrane</keyword>
<keyword id="KW-1133">Transmembrane helix</keyword>
<organism>
    <name type="scientific">Rattus norvegicus</name>
    <name type="common">Rat</name>
    <dbReference type="NCBI Taxonomy" id="10116"/>
    <lineage>
        <taxon>Eukaryota</taxon>
        <taxon>Metazoa</taxon>
        <taxon>Chordata</taxon>
        <taxon>Craniata</taxon>
        <taxon>Vertebrata</taxon>
        <taxon>Euteleostomi</taxon>
        <taxon>Mammalia</taxon>
        <taxon>Eutheria</taxon>
        <taxon>Euarchontoglires</taxon>
        <taxon>Glires</taxon>
        <taxon>Rodentia</taxon>
        <taxon>Myomorpha</taxon>
        <taxon>Muroidea</taxon>
        <taxon>Muridae</taxon>
        <taxon>Murinae</taxon>
        <taxon>Rattus</taxon>
    </lineage>
</organism>
<feature type="signal peptide" evidence="1">
    <location>
        <begin position="1"/>
        <end position="29"/>
    </location>
</feature>
<feature type="chain" id="PRO_0000014755" description="Endothelial cell-selective adhesion molecule">
    <location>
        <begin position="30"/>
        <end position="394"/>
    </location>
</feature>
<feature type="topological domain" description="Extracellular" evidence="4">
    <location>
        <begin position="30"/>
        <end position="251"/>
    </location>
</feature>
<feature type="transmembrane region" description="Helical" evidence="4">
    <location>
        <begin position="252"/>
        <end position="272"/>
    </location>
</feature>
<feature type="topological domain" description="Cytoplasmic" evidence="4">
    <location>
        <begin position="273"/>
        <end position="394"/>
    </location>
</feature>
<feature type="domain" description="Ig-like V-type">
    <location>
        <begin position="37"/>
        <end position="146"/>
    </location>
</feature>
<feature type="domain" description="Ig-like C2-type">
    <location>
        <begin position="156"/>
        <end position="243"/>
    </location>
</feature>
<feature type="region of interest" description="Disordered" evidence="6">
    <location>
        <begin position="300"/>
        <end position="372"/>
    </location>
</feature>
<feature type="compositionally biased region" description="Polar residues" evidence="6">
    <location>
        <begin position="303"/>
        <end position="318"/>
    </location>
</feature>
<feature type="compositionally biased region" description="Polar residues" evidence="6">
    <location>
        <begin position="335"/>
        <end position="347"/>
    </location>
</feature>
<feature type="modified residue" description="Phosphoserine" evidence="7">
    <location>
        <position position="304"/>
    </location>
</feature>
<feature type="modified residue" description="Phosphothreonine" evidence="2">
    <location>
        <position position="336"/>
    </location>
</feature>
<feature type="modified residue" description="Phosphothreonine" evidence="2">
    <location>
        <position position="338"/>
    </location>
</feature>
<feature type="modified residue" description="Phosphoserine" evidence="2">
    <location>
        <position position="340"/>
    </location>
</feature>
<feature type="modified residue" description="Phosphoserine" evidence="2">
    <location>
        <position position="343"/>
    </location>
</feature>
<feature type="modified residue" description="Phosphoserine" evidence="7">
    <location>
        <position position="348"/>
    </location>
</feature>
<feature type="glycosylation site" description="N-linked (GlcNAc...) asparagine" evidence="4">
    <location>
        <position position="111"/>
    </location>
</feature>
<feature type="glycosylation site" description="N-linked (GlcNAc...) asparagine" evidence="4">
    <location>
        <position position="172"/>
    </location>
</feature>
<feature type="glycosylation site" description="N-linked (GlcNAc...) asparagine" evidence="4">
    <location>
        <position position="216"/>
    </location>
</feature>
<feature type="glycosylation site" description="N-linked (GlcNAc...) asparagine" evidence="4">
    <location>
        <position position="239"/>
    </location>
</feature>
<feature type="disulfide bond" evidence="5">
    <location>
        <begin position="177"/>
        <end position="227"/>
    </location>
</feature>
<sequence length="394" mass="41936">MILPARTPETSLLRVLFLGLSTLAAFSLAQMELHVPPGLNKLEAVEGEEVVLPAWYTMAREESSSHPWEAPFLIWFLEQEGKEPKQVLSYFKGSLSNKPGVTLVHSISTRNVSLRLDALQEGDSGTYRCSVNAYDSDGKNIGHSIKTIELKVLVPPAPPSCSFQGVPYVGTNVTLNCKSPRSKPTAQYQWERLAPSSQVFFGPALDTVRGSLKLTNISTAMSGVYVCKAQNRVGFAQCNVTLDVMTGSKAAVVAGAVVGTFVGLVLIAGLVLLYQRRSKTLEELANDIKEDAIAPRTLPWTKGSDTISKNGTLSSVTSARALRPPKAAPPRPGTFTPTPSVSSQALSSPRLPRTDGPPPQAVSLTPGGVSSSTLNRMGAVPVMVPAQSQAGSLV</sequence>
<reference key="1">
    <citation type="journal article" date="2004" name="Genome Res.">
        <title>The status, quality, and expansion of the NIH full-length cDNA project: the Mammalian Gene Collection (MGC).</title>
        <authorList>
            <consortium name="The MGC Project Team"/>
        </authorList>
    </citation>
    <scope>NUCLEOTIDE SEQUENCE [LARGE SCALE MRNA]</scope>
    <source>
        <tissue>Lung</tissue>
    </source>
</reference>
<reference key="2">
    <citation type="journal article" date="2012" name="Nat. Commun.">
        <title>Quantitative maps of protein phosphorylation sites across 14 different rat organs and tissues.</title>
        <authorList>
            <person name="Lundby A."/>
            <person name="Secher A."/>
            <person name="Lage K."/>
            <person name="Nordsborg N.B."/>
            <person name="Dmytriyev A."/>
            <person name="Lundby C."/>
            <person name="Olsen J.V."/>
        </authorList>
    </citation>
    <scope>PHOSPHORYLATION [LARGE SCALE ANALYSIS] AT SER-304 AND SER-348</scope>
    <scope>IDENTIFICATION BY MASS SPECTROMETRY [LARGE SCALE ANALYSIS]</scope>
</reference>
<dbReference type="EMBL" id="BC079093">
    <property type="protein sequence ID" value="AAH79093.1"/>
    <property type="molecule type" value="mRNA"/>
</dbReference>
<dbReference type="RefSeq" id="NP_001004245.1">
    <property type="nucleotide sequence ID" value="NM_001004245.1"/>
</dbReference>
<dbReference type="FunCoup" id="Q6AYD4">
    <property type="interactions" value="1315"/>
</dbReference>
<dbReference type="STRING" id="10116.ENSRNOP00000051485"/>
<dbReference type="GlyCosmos" id="Q6AYD4">
    <property type="glycosylation" value="4 sites, No reported glycans"/>
</dbReference>
<dbReference type="GlyGen" id="Q6AYD4">
    <property type="glycosylation" value="5 sites"/>
</dbReference>
<dbReference type="iPTMnet" id="Q6AYD4"/>
<dbReference type="PhosphoSitePlus" id="Q6AYD4"/>
<dbReference type="PaxDb" id="10116-ENSRNOP00000051485"/>
<dbReference type="Ensembl" id="ENSRNOT00000050609.5">
    <property type="protein sequence ID" value="ENSRNOP00000051485.2"/>
    <property type="gene ID" value="ENSRNOG00000033217.5"/>
</dbReference>
<dbReference type="GeneID" id="300519"/>
<dbReference type="KEGG" id="rno:300519"/>
<dbReference type="UCSC" id="RGD:1303286">
    <property type="organism name" value="rat"/>
</dbReference>
<dbReference type="AGR" id="RGD:1303286"/>
<dbReference type="CTD" id="90952"/>
<dbReference type="RGD" id="1303286">
    <property type="gene designation" value="Esam"/>
</dbReference>
<dbReference type="eggNOG" id="ENOG502QRZ4">
    <property type="taxonomic scope" value="Eukaryota"/>
</dbReference>
<dbReference type="GeneTree" id="ENSGT00940000157231"/>
<dbReference type="InParanoid" id="Q6AYD4"/>
<dbReference type="OMA" id="REMPFVM"/>
<dbReference type="PhylomeDB" id="Q6AYD4"/>
<dbReference type="TreeFam" id="TF330875"/>
<dbReference type="Reactome" id="R-RNO-202733">
    <property type="pathway name" value="Cell surface interactions at the vascular wall"/>
</dbReference>
<dbReference type="PRO" id="PR:Q6AYD4"/>
<dbReference type="Proteomes" id="UP000002494">
    <property type="component" value="Chromosome 8"/>
</dbReference>
<dbReference type="Bgee" id="ENSRNOG00000033217">
    <property type="expression patterns" value="Expressed in lung and 19 other cell types or tissues"/>
</dbReference>
<dbReference type="ExpressionAtlas" id="Q6AYD4">
    <property type="expression patterns" value="baseline and differential"/>
</dbReference>
<dbReference type="GO" id="GO:0005912">
    <property type="term" value="C:adherens junction"/>
    <property type="evidence" value="ECO:0000266"/>
    <property type="project" value="RGD"/>
</dbReference>
<dbReference type="GO" id="GO:0005923">
    <property type="term" value="C:bicellular tight junction"/>
    <property type="evidence" value="ECO:0000266"/>
    <property type="project" value="RGD"/>
</dbReference>
<dbReference type="GO" id="GO:0005911">
    <property type="term" value="C:cell-cell junction"/>
    <property type="evidence" value="ECO:0000266"/>
    <property type="project" value="RGD"/>
</dbReference>
<dbReference type="GO" id="GO:0005886">
    <property type="term" value="C:plasma membrane"/>
    <property type="evidence" value="ECO:0000250"/>
    <property type="project" value="UniProtKB"/>
</dbReference>
<dbReference type="GO" id="GO:0032991">
    <property type="term" value="C:protein-containing complex"/>
    <property type="evidence" value="ECO:0000266"/>
    <property type="project" value="RGD"/>
</dbReference>
<dbReference type="GO" id="GO:0098632">
    <property type="term" value="F:cell-cell adhesion mediator activity"/>
    <property type="evidence" value="ECO:0000266"/>
    <property type="project" value="RGD"/>
</dbReference>
<dbReference type="GO" id="GO:0070830">
    <property type="term" value="P:bicellular tight junction assembly"/>
    <property type="evidence" value="ECO:0000266"/>
    <property type="project" value="RGD"/>
</dbReference>
<dbReference type="GO" id="GO:0098609">
    <property type="term" value="P:cell-cell adhesion"/>
    <property type="evidence" value="ECO:0000266"/>
    <property type="project" value="RGD"/>
</dbReference>
<dbReference type="GO" id="GO:0007156">
    <property type="term" value="P:homophilic cell adhesion via plasma membrane adhesion molecules"/>
    <property type="evidence" value="ECO:0000266"/>
    <property type="project" value="RGD"/>
</dbReference>
<dbReference type="GO" id="GO:0008104">
    <property type="term" value="P:protein localization"/>
    <property type="evidence" value="ECO:0000266"/>
    <property type="project" value="RGD"/>
</dbReference>
<dbReference type="GO" id="GO:0032956">
    <property type="term" value="P:regulation of actin cytoskeleton organization"/>
    <property type="evidence" value="ECO:0000266"/>
    <property type="project" value="RGD"/>
</dbReference>
<dbReference type="GO" id="GO:0030833">
    <property type="term" value="P:regulation of actin filament polymerization"/>
    <property type="evidence" value="ECO:0000266"/>
    <property type="project" value="RGD"/>
</dbReference>
<dbReference type="FunFam" id="2.60.40.10:FF:000095">
    <property type="entry name" value="immunoglobulin superfamily member 11 isoform X1"/>
    <property type="match status" value="1"/>
</dbReference>
<dbReference type="Gene3D" id="2.60.40.10">
    <property type="entry name" value="Immunoglobulins"/>
    <property type="match status" value="2"/>
</dbReference>
<dbReference type="InterPro" id="IPR042757">
    <property type="entry name" value="ESAM"/>
</dbReference>
<dbReference type="InterPro" id="IPR007110">
    <property type="entry name" value="Ig-like_dom"/>
</dbReference>
<dbReference type="InterPro" id="IPR036179">
    <property type="entry name" value="Ig-like_dom_sf"/>
</dbReference>
<dbReference type="InterPro" id="IPR013783">
    <property type="entry name" value="Ig-like_fold"/>
</dbReference>
<dbReference type="InterPro" id="IPR003599">
    <property type="entry name" value="Ig_sub"/>
</dbReference>
<dbReference type="InterPro" id="IPR003598">
    <property type="entry name" value="Ig_sub2"/>
</dbReference>
<dbReference type="InterPro" id="IPR013106">
    <property type="entry name" value="Ig_V-set"/>
</dbReference>
<dbReference type="PANTHER" id="PTHR44549">
    <property type="entry name" value="ENDOTHELIAL CELL-SELECTIVE ADHESION MOLECULE"/>
    <property type="match status" value="1"/>
</dbReference>
<dbReference type="PANTHER" id="PTHR44549:SF1">
    <property type="entry name" value="ENDOTHELIAL CELL-SELECTIVE ADHESION MOLECULE"/>
    <property type="match status" value="1"/>
</dbReference>
<dbReference type="Pfam" id="PF13927">
    <property type="entry name" value="Ig_3"/>
    <property type="match status" value="1"/>
</dbReference>
<dbReference type="Pfam" id="PF07686">
    <property type="entry name" value="V-set"/>
    <property type="match status" value="1"/>
</dbReference>
<dbReference type="SMART" id="SM00409">
    <property type="entry name" value="IG"/>
    <property type="match status" value="2"/>
</dbReference>
<dbReference type="SMART" id="SM00408">
    <property type="entry name" value="IGc2"/>
    <property type="match status" value="1"/>
</dbReference>
<dbReference type="SUPFAM" id="SSF48726">
    <property type="entry name" value="Immunoglobulin"/>
    <property type="match status" value="2"/>
</dbReference>
<dbReference type="PROSITE" id="PS50835">
    <property type="entry name" value="IG_LIKE"/>
    <property type="match status" value="2"/>
</dbReference>
<protein>
    <recommendedName>
        <fullName>Endothelial cell-selective adhesion molecule</fullName>
    </recommendedName>
</protein>
<evidence type="ECO:0000250" key="1"/>
<evidence type="ECO:0000250" key="2">
    <source>
        <dbReference type="UniProtKB" id="Q925F2"/>
    </source>
</evidence>
<evidence type="ECO:0000250" key="3">
    <source>
        <dbReference type="UniProtKB" id="Q96AP7"/>
    </source>
</evidence>
<evidence type="ECO:0000255" key="4"/>
<evidence type="ECO:0000255" key="5">
    <source>
        <dbReference type="PROSITE-ProRule" id="PRU00114"/>
    </source>
</evidence>
<evidence type="ECO:0000256" key="6">
    <source>
        <dbReference type="SAM" id="MobiDB-lite"/>
    </source>
</evidence>
<evidence type="ECO:0007744" key="7">
    <source>
    </source>
</evidence>
<name>ESAM_RAT</name>
<gene>
    <name type="primary">Esam</name>
</gene>
<proteinExistence type="evidence at protein level"/>
<comment type="function">
    <text evidence="1">Can mediate aggregation most likely through a homophilic molecular interaction.</text>
</comment>
<comment type="subunit">
    <text evidence="2">Interacts with MAGI1.</text>
</comment>
<comment type="subcellular location">
    <subcellularLocation>
        <location evidence="2">Cell junction</location>
        <location evidence="2">Adherens junction</location>
    </subcellularLocation>
    <subcellularLocation>
        <location evidence="2">Cell junction</location>
        <location evidence="2">Tight junction</location>
    </subcellularLocation>
    <subcellularLocation>
        <location evidence="3">Cell membrane</location>
        <topology evidence="2">Single-pass type I membrane protein</topology>
    </subcellularLocation>
</comment>